<gene>
    <name type="primary">DOT1</name>
    <name type="ORF">FGRRES_02567</name>
    <name type="ORF">FGSG_02567</name>
</gene>
<name>DOT1_GIBZE</name>
<comment type="function">
    <text evidence="2">Histone methyltransferase that specifically trimethylates histone H3 to form H3K79me3. This methylation is required for telomere silencing and for the pachytene checkpoint during the meiotic cell cycle by allowing the recruitment of RAD9 to double strand breaks. Nucleosomes are preferred as substrate compared to free histone.</text>
</comment>
<comment type="catalytic activity">
    <reaction evidence="2 3">
        <text>L-lysyl(79)-[histone H3] + 3 S-adenosyl-L-methionine = N(6),N(6),N(6)-trimethyl-L-lysyl(79)-[histone H3] + 3 S-adenosyl-L-homocysteine + 3 H(+)</text>
        <dbReference type="Rhea" id="RHEA:60328"/>
        <dbReference type="Rhea" id="RHEA-COMP:15549"/>
        <dbReference type="Rhea" id="RHEA-COMP:15552"/>
        <dbReference type="ChEBI" id="CHEBI:15378"/>
        <dbReference type="ChEBI" id="CHEBI:29969"/>
        <dbReference type="ChEBI" id="CHEBI:57856"/>
        <dbReference type="ChEBI" id="CHEBI:59789"/>
        <dbReference type="ChEBI" id="CHEBI:61961"/>
        <dbReference type="EC" id="2.1.1.360"/>
    </reaction>
</comment>
<comment type="activity regulation">
    <text evidence="1">Ubiquitination of histone H2B to form H2BK123ub1 is required for efficient DOT1 methyltransferase activity on histone H3.</text>
</comment>
<comment type="subcellular location">
    <subcellularLocation>
        <location evidence="1">Nucleus</location>
    </subcellularLocation>
</comment>
<comment type="miscellaneous">
    <text>In contrast to other lysine histone methyltransferases, it does not contain a SET domain, suggesting the existence of another mechanism for methylation of lysine residues of histones.</text>
</comment>
<comment type="similarity">
    <text evidence="3">Belongs to the class I-like SAM-binding methyltransferase superfamily. DOT1 family.</text>
</comment>
<proteinExistence type="inferred from homology"/>
<reference key="1">
    <citation type="journal article" date="2007" name="Science">
        <title>The Fusarium graminearum genome reveals a link between localized polymorphism and pathogen specialization.</title>
        <authorList>
            <person name="Cuomo C.A."/>
            <person name="Gueldener U."/>
            <person name="Xu J.-R."/>
            <person name="Trail F."/>
            <person name="Turgeon B.G."/>
            <person name="Di Pietro A."/>
            <person name="Walton J.D."/>
            <person name="Ma L.-J."/>
            <person name="Baker S.E."/>
            <person name="Rep M."/>
            <person name="Adam G."/>
            <person name="Antoniw J."/>
            <person name="Baldwin T."/>
            <person name="Calvo S.E."/>
            <person name="Chang Y.-L."/>
            <person name="DeCaprio D."/>
            <person name="Gale L.R."/>
            <person name="Gnerre S."/>
            <person name="Goswami R.S."/>
            <person name="Hammond-Kosack K."/>
            <person name="Harris L.J."/>
            <person name="Hilburn K."/>
            <person name="Kennell J.C."/>
            <person name="Kroken S."/>
            <person name="Magnuson J.K."/>
            <person name="Mannhaupt G."/>
            <person name="Mauceli E.W."/>
            <person name="Mewes H.-W."/>
            <person name="Mitterbauer R."/>
            <person name="Muehlbauer G."/>
            <person name="Muensterkoetter M."/>
            <person name="Nelson D."/>
            <person name="O'Donnell K."/>
            <person name="Ouellet T."/>
            <person name="Qi W."/>
            <person name="Quesneville H."/>
            <person name="Roncero M.I.G."/>
            <person name="Seong K.-Y."/>
            <person name="Tetko I.V."/>
            <person name="Urban M."/>
            <person name="Waalwijk C."/>
            <person name="Ward T.J."/>
            <person name="Yao J."/>
            <person name="Birren B.W."/>
            <person name="Kistler H.C."/>
        </authorList>
    </citation>
    <scope>NUCLEOTIDE SEQUENCE [LARGE SCALE GENOMIC DNA]</scope>
    <source>
        <strain>ATCC MYA-4620 / CBS 123657 / FGSC 9075 / NRRL 31084 / PH-1</strain>
    </source>
</reference>
<reference key="2">
    <citation type="journal article" date="2010" name="Nature">
        <title>Comparative genomics reveals mobile pathogenicity chromosomes in Fusarium.</title>
        <authorList>
            <person name="Ma L.-J."/>
            <person name="van der Does H.C."/>
            <person name="Borkovich K.A."/>
            <person name="Coleman J.J."/>
            <person name="Daboussi M.-J."/>
            <person name="Di Pietro A."/>
            <person name="Dufresne M."/>
            <person name="Freitag M."/>
            <person name="Grabherr M."/>
            <person name="Henrissat B."/>
            <person name="Houterman P.M."/>
            <person name="Kang S."/>
            <person name="Shim W.-B."/>
            <person name="Woloshuk C."/>
            <person name="Xie X."/>
            <person name="Xu J.-R."/>
            <person name="Antoniw J."/>
            <person name="Baker S.E."/>
            <person name="Bluhm B.H."/>
            <person name="Breakspear A."/>
            <person name="Brown D.W."/>
            <person name="Butchko R.A.E."/>
            <person name="Chapman S."/>
            <person name="Coulson R."/>
            <person name="Coutinho P.M."/>
            <person name="Danchin E.G.J."/>
            <person name="Diener A."/>
            <person name="Gale L.R."/>
            <person name="Gardiner D.M."/>
            <person name="Goff S."/>
            <person name="Hammond-Kosack K.E."/>
            <person name="Hilburn K."/>
            <person name="Hua-Van A."/>
            <person name="Jonkers W."/>
            <person name="Kazan K."/>
            <person name="Kodira C.D."/>
            <person name="Koehrsen M."/>
            <person name="Kumar L."/>
            <person name="Lee Y.-H."/>
            <person name="Li L."/>
            <person name="Manners J.M."/>
            <person name="Miranda-Saavedra D."/>
            <person name="Mukherjee M."/>
            <person name="Park G."/>
            <person name="Park J."/>
            <person name="Park S.-Y."/>
            <person name="Proctor R.H."/>
            <person name="Regev A."/>
            <person name="Ruiz-Roldan M.C."/>
            <person name="Sain D."/>
            <person name="Sakthikumar S."/>
            <person name="Sykes S."/>
            <person name="Schwartz D.C."/>
            <person name="Turgeon B.G."/>
            <person name="Wapinski I."/>
            <person name="Yoder O."/>
            <person name="Young S."/>
            <person name="Zeng Q."/>
            <person name="Zhou S."/>
            <person name="Galagan J."/>
            <person name="Cuomo C.A."/>
            <person name="Kistler H.C."/>
            <person name="Rep M."/>
        </authorList>
    </citation>
    <scope>GENOME REANNOTATION</scope>
    <source>
        <strain>ATCC MYA-4620 / CBS 123657 / FGSC 9075 / NRRL 31084 / PH-1</strain>
    </source>
</reference>
<reference key="3">
    <citation type="journal article" date="2015" name="BMC Genomics">
        <title>The completed genome sequence of the pathogenic ascomycete fungus Fusarium graminearum.</title>
        <authorList>
            <person name="King R."/>
            <person name="Urban M."/>
            <person name="Hammond-Kosack M.C.U."/>
            <person name="Hassani-Pak K."/>
            <person name="Hammond-Kosack K.E."/>
        </authorList>
    </citation>
    <scope>NUCLEOTIDE SEQUENCE [LARGE SCALE GENOMIC DNA]</scope>
    <source>
        <strain>ATCC MYA-4620 / CBS 123657 / FGSC 9075 / NRRL 31084 / PH-1</strain>
    </source>
</reference>
<protein>
    <recommendedName>
        <fullName>Histone-lysine N-methyltransferase, H3 lysine-79 specific</fullName>
        <ecNumber>2.1.1.360</ecNumber>
    </recommendedName>
    <alternativeName>
        <fullName>Histone H3-K79 methyltransferase</fullName>
        <shortName>H3-K79-HMTase</shortName>
    </alternativeName>
</protein>
<sequence length="493" mass="55587">MRLFGGKNNKFKVDPPKIRIEKVVVDRPAQKPKPKPNPALSGSASRSSSSHHPSPKPLARQASHSPYPSSCDEKRLERKRKAPSVSRKSPASDRIEFDKDSDGEDDGWMTLDTKRQRKGTEDSGFVDPNRKLRSVRAFEERMDSRKFIHAVDVASLEHKCVPVMGAQKDEVAIRLQYPSLQPREKYELVWGKDKIDAVEASIKVVRHVAETYLTEEEAEPFTNPNGGIIRRLEKASNRNIQDLMGFKAALREYNEKLRALVDDGVIAKNLDKMHELPQHLVAFILDQIYDRTVALKVELLSKYENGTDYVYGELLHPFISKVLVEQTRMTSGQVFVDLGSGVGNVVLQAALEIGCESWGCEMMENACNLAEEQKKEFDARCMLWGVRPGKVHLERGDFRKNAPIHEALKRADVVLVNNKAFTSQLNDDLVRMFLDLKSGCKVVSLKSFVAEKSNNHNINDVGSTILEVEECIYPEGYVSWTNAGGSYFISTRK</sequence>
<dbReference type="EC" id="2.1.1.360"/>
<dbReference type="EMBL" id="DS231663">
    <property type="protein sequence ID" value="ESU08020.1"/>
    <property type="molecule type" value="Genomic_DNA"/>
</dbReference>
<dbReference type="EMBL" id="HG970332">
    <property type="protein sequence ID" value="CEF74881.1"/>
    <property type="molecule type" value="Genomic_DNA"/>
</dbReference>
<dbReference type="RefSeq" id="XP_011318505.1">
    <property type="nucleotide sequence ID" value="XM_011320203.1"/>
</dbReference>
<dbReference type="SMR" id="Q4IJP1"/>
<dbReference type="STRING" id="229533.Q4IJP1"/>
<dbReference type="GeneID" id="23549937"/>
<dbReference type="KEGG" id="fgr:FGSG_02567"/>
<dbReference type="VEuPathDB" id="FungiDB:FGRAMPH1_01G06153"/>
<dbReference type="eggNOG" id="KOG3924">
    <property type="taxonomic scope" value="Eukaryota"/>
</dbReference>
<dbReference type="HOGENOM" id="CLU_027287_2_0_1"/>
<dbReference type="InParanoid" id="Q4IJP1"/>
<dbReference type="OrthoDB" id="101873at110618"/>
<dbReference type="Proteomes" id="UP000070720">
    <property type="component" value="Chromosome 1"/>
</dbReference>
<dbReference type="GO" id="GO:0000781">
    <property type="term" value="C:chromosome, telomeric region"/>
    <property type="evidence" value="ECO:0007669"/>
    <property type="project" value="GOC"/>
</dbReference>
<dbReference type="GO" id="GO:0000786">
    <property type="term" value="C:nucleosome"/>
    <property type="evidence" value="ECO:0007669"/>
    <property type="project" value="InterPro"/>
</dbReference>
<dbReference type="GO" id="GO:0005634">
    <property type="term" value="C:nucleus"/>
    <property type="evidence" value="ECO:0007669"/>
    <property type="project" value="UniProtKB-SubCell"/>
</dbReference>
<dbReference type="GO" id="GO:0042393">
    <property type="term" value="F:histone binding"/>
    <property type="evidence" value="ECO:0007669"/>
    <property type="project" value="InterPro"/>
</dbReference>
<dbReference type="GO" id="GO:0140956">
    <property type="term" value="F:histone H3K79 trimethyltransferase activity"/>
    <property type="evidence" value="ECO:0007669"/>
    <property type="project" value="UniProtKB-EC"/>
</dbReference>
<dbReference type="GO" id="GO:0000077">
    <property type="term" value="P:DNA damage checkpoint signaling"/>
    <property type="evidence" value="ECO:0007669"/>
    <property type="project" value="InterPro"/>
</dbReference>
<dbReference type="GO" id="GO:0006281">
    <property type="term" value="P:DNA repair"/>
    <property type="evidence" value="ECO:0007669"/>
    <property type="project" value="InterPro"/>
</dbReference>
<dbReference type="GO" id="GO:0032259">
    <property type="term" value="P:methylation"/>
    <property type="evidence" value="ECO:0007669"/>
    <property type="project" value="UniProtKB-KW"/>
</dbReference>
<dbReference type="GO" id="GO:0031509">
    <property type="term" value="P:subtelomeric heterochromatin formation"/>
    <property type="evidence" value="ECO:0007669"/>
    <property type="project" value="InterPro"/>
</dbReference>
<dbReference type="CDD" id="cd02440">
    <property type="entry name" value="AdoMet_MTases"/>
    <property type="match status" value="1"/>
</dbReference>
<dbReference type="FunFam" id="3.40.50.150:FF:000033">
    <property type="entry name" value="Histone-lysine N-methyltransferase, H3 lysine-79 specific"/>
    <property type="match status" value="1"/>
</dbReference>
<dbReference type="Gene3D" id="1.10.260.170">
    <property type="match status" value="1"/>
</dbReference>
<dbReference type="Gene3D" id="3.40.50.150">
    <property type="entry name" value="Vaccinia Virus protein VP39"/>
    <property type="match status" value="1"/>
</dbReference>
<dbReference type="InterPro" id="IPR021162">
    <property type="entry name" value="Dot1"/>
</dbReference>
<dbReference type="InterPro" id="IPR025789">
    <property type="entry name" value="DOT1_dom"/>
</dbReference>
<dbReference type="InterPro" id="IPR030445">
    <property type="entry name" value="H3-K79_meTrfase"/>
</dbReference>
<dbReference type="InterPro" id="IPR029063">
    <property type="entry name" value="SAM-dependent_MTases_sf"/>
</dbReference>
<dbReference type="PANTHER" id="PTHR21451">
    <property type="entry name" value="HISTONE H3 METHYLTRANSFERASE"/>
    <property type="match status" value="1"/>
</dbReference>
<dbReference type="PANTHER" id="PTHR21451:SF0">
    <property type="entry name" value="HISTONE-LYSINE N-METHYLTRANSFERASE, H3 LYSINE-79 SPECIFIC"/>
    <property type="match status" value="1"/>
</dbReference>
<dbReference type="Pfam" id="PF08123">
    <property type="entry name" value="DOT1"/>
    <property type="match status" value="1"/>
</dbReference>
<dbReference type="PIRSF" id="PIRSF017570">
    <property type="entry name" value="Histone_H3-K79_MeTrfase"/>
    <property type="match status" value="1"/>
</dbReference>
<dbReference type="SUPFAM" id="SSF53335">
    <property type="entry name" value="S-adenosyl-L-methionine-dependent methyltransferases"/>
    <property type="match status" value="1"/>
</dbReference>
<dbReference type="PROSITE" id="PS51569">
    <property type="entry name" value="DOT1"/>
    <property type="match status" value="1"/>
</dbReference>
<keyword id="KW-0156">Chromatin regulator</keyword>
<keyword id="KW-0489">Methyltransferase</keyword>
<keyword id="KW-0539">Nucleus</keyword>
<keyword id="KW-1185">Reference proteome</keyword>
<keyword id="KW-0677">Repeat</keyword>
<keyword id="KW-0949">S-adenosyl-L-methionine</keyword>
<keyword id="KW-0804">Transcription</keyword>
<keyword id="KW-0805">Transcription regulation</keyword>
<keyword id="KW-0808">Transferase</keyword>
<organism>
    <name type="scientific">Gibberella zeae (strain ATCC MYA-4620 / CBS 123657 / FGSC 9075 / NRRL 31084 / PH-1)</name>
    <name type="common">Wheat head blight fungus</name>
    <name type="synonym">Fusarium graminearum</name>
    <dbReference type="NCBI Taxonomy" id="229533"/>
    <lineage>
        <taxon>Eukaryota</taxon>
        <taxon>Fungi</taxon>
        <taxon>Dikarya</taxon>
        <taxon>Ascomycota</taxon>
        <taxon>Pezizomycotina</taxon>
        <taxon>Sordariomycetes</taxon>
        <taxon>Hypocreomycetidae</taxon>
        <taxon>Hypocreales</taxon>
        <taxon>Nectriaceae</taxon>
        <taxon>Fusarium</taxon>
    </lineage>
</organism>
<evidence type="ECO:0000250" key="1"/>
<evidence type="ECO:0000250" key="2">
    <source>
        <dbReference type="UniProtKB" id="Q04089"/>
    </source>
</evidence>
<evidence type="ECO:0000255" key="3">
    <source>
        <dbReference type="PROSITE-ProRule" id="PRU00902"/>
    </source>
</evidence>
<evidence type="ECO:0000256" key="4">
    <source>
        <dbReference type="SAM" id="MobiDB-lite"/>
    </source>
</evidence>
<feature type="chain" id="PRO_0000270613" description="Histone-lysine N-methyltransferase, H3 lysine-79 specific">
    <location>
        <begin position="1"/>
        <end position="493"/>
    </location>
</feature>
<feature type="domain" description="DOT1" evidence="3">
    <location>
        <begin position="182"/>
        <end position="493"/>
    </location>
</feature>
<feature type="region of interest" description="Disordered" evidence="4">
    <location>
        <begin position="1"/>
        <end position="127"/>
    </location>
</feature>
<feature type="compositionally biased region" description="Basic and acidic residues" evidence="4">
    <location>
        <begin position="11"/>
        <end position="29"/>
    </location>
</feature>
<feature type="compositionally biased region" description="Low complexity" evidence="4">
    <location>
        <begin position="38"/>
        <end position="52"/>
    </location>
</feature>
<feature type="compositionally biased region" description="Basic and acidic residues" evidence="4">
    <location>
        <begin position="90"/>
        <end position="100"/>
    </location>
</feature>
<feature type="compositionally biased region" description="Basic and acidic residues" evidence="4">
    <location>
        <begin position="112"/>
        <end position="121"/>
    </location>
</feature>
<feature type="binding site" evidence="3">
    <location>
        <begin position="311"/>
        <end position="314"/>
    </location>
    <ligand>
        <name>S-adenosyl-L-methionine</name>
        <dbReference type="ChEBI" id="CHEBI:59789"/>
    </ligand>
</feature>
<feature type="binding site" evidence="3">
    <location>
        <begin position="335"/>
        <end position="344"/>
    </location>
    <ligand>
        <name>S-adenosyl-L-methionine</name>
        <dbReference type="ChEBI" id="CHEBI:59789"/>
    </ligand>
</feature>
<feature type="binding site" evidence="3">
    <location>
        <position position="361"/>
    </location>
    <ligand>
        <name>S-adenosyl-L-methionine</name>
        <dbReference type="ChEBI" id="CHEBI:59789"/>
    </ligand>
</feature>
<feature type="binding site" evidence="3">
    <location>
        <begin position="397"/>
        <end position="398"/>
    </location>
    <ligand>
        <name>S-adenosyl-L-methionine</name>
        <dbReference type="ChEBI" id="CHEBI:59789"/>
    </ligand>
</feature>
<accession>Q4IJP1</accession>
<accession>A0A0E0RUF6</accession>
<accession>V6R7Y6</accession>